<reference key="1">
    <citation type="journal article" date="1993" name="Infect. Immun.">
        <title>A partial cDNA clone of trypomastigote decay-accelerating factor (T-DAF), a developmentally regulated complement inhibitor of Trypanosoma cruzi, has genetic and functional similarities to the human complement inhibitor DAF.</title>
        <authorList>
            <person name="Tambourgi D.V."/>
            <person name="Kipnis T.L."/>
            <person name="da Silva W.D."/>
            <person name="Joiner K.A."/>
            <person name="Sher A."/>
            <person name="Heath S."/>
            <person name="Hall B.F."/>
            <person name="Ogden G.B."/>
        </authorList>
    </citation>
    <scope>NUCLEOTIDE SEQUENCE [MRNA]</scope>
    <source>
        <strain>Miranda 88</strain>
    </source>
</reference>
<dbReference type="EMBL" id="S65519">
    <property type="protein sequence ID" value="AAB27990.1"/>
    <property type="molecule type" value="mRNA"/>
</dbReference>
<dbReference type="SMR" id="Q26327"/>
<dbReference type="VEuPathDB" id="TriTrypDB:BCY84_02486"/>
<dbReference type="VEuPathDB" id="TriTrypDB:C3747_21g214"/>
<dbReference type="VEuPathDB" id="TriTrypDB:C4B63_68g70"/>
<dbReference type="VEuPathDB" id="TriTrypDB:ECC02_005444"/>
<dbReference type="VEuPathDB" id="TriTrypDB:Tc_MARK_9479"/>
<dbReference type="VEuPathDB" id="TriTrypDB:TcBrA4_0045020"/>
<dbReference type="VEuPathDB" id="TriTrypDB:TcCL_Unassigned06099"/>
<dbReference type="VEuPathDB" id="TriTrypDB:TcCLB.509601.10"/>
<dbReference type="VEuPathDB" id="TriTrypDB:TcCLB.509767.10"/>
<dbReference type="VEuPathDB" id="TriTrypDB:TCDM_11487"/>
<dbReference type="VEuPathDB" id="TriTrypDB:TcG_06871"/>
<dbReference type="VEuPathDB" id="TriTrypDB:TCSYLVIO_000225"/>
<dbReference type="VEuPathDB" id="TriTrypDB:TcYC6_0176850"/>
<dbReference type="GO" id="GO:0004308">
    <property type="term" value="F:exo-alpha-sialidase activity"/>
    <property type="evidence" value="ECO:0007669"/>
    <property type="project" value="InterPro"/>
</dbReference>
<dbReference type="Gene3D" id="2.60.120.200">
    <property type="match status" value="1"/>
</dbReference>
<dbReference type="InterPro" id="IPR013320">
    <property type="entry name" value="ConA-like_dom_sf"/>
</dbReference>
<dbReference type="InterPro" id="IPR008377">
    <property type="entry name" value="Sialidase_trypan"/>
</dbReference>
<dbReference type="InterPro" id="IPR055239">
    <property type="entry name" value="TS_C"/>
</dbReference>
<dbReference type="Pfam" id="PF22925">
    <property type="entry name" value="TS_C"/>
    <property type="match status" value="1"/>
</dbReference>
<dbReference type="PRINTS" id="PR01803">
    <property type="entry name" value="TCSIALIDASE"/>
</dbReference>
<dbReference type="SUPFAM" id="SSF49899">
    <property type="entry name" value="Concanavalin A-like lectins/glucanases"/>
    <property type="match status" value="1"/>
</dbReference>
<evidence type="ECO:0000305" key="1"/>
<protein>
    <recommendedName>
        <fullName>Trypomastigote decay-accelerating factor</fullName>
        <shortName>T-DAF</shortName>
    </recommendedName>
</protein>
<feature type="chain" id="PRO_0000048522" description="Trypomastigote decay-accelerating factor">
    <location>
        <begin position="1" status="less than"/>
        <end position="95" status="greater than"/>
    </location>
</feature>
<feature type="non-terminal residue">
    <location>
        <position position="1"/>
    </location>
</feature>
<feature type="non-terminal residue">
    <location>
        <position position="95"/>
    </location>
</feature>
<organism>
    <name type="scientific">Trypanosoma cruzi</name>
    <dbReference type="NCBI Taxonomy" id="5693"/>
    <lineage>
        <taxon>Eukaryota</taxon>
        <taxon>Discoba</taxon>
        <taxon>Euglenozoa</taxon>
        <taxon>Kinetoplastea</taxon>
        <taxon>Metakinetoplastina</taxon>
        <taxon>Trypanosomatida</taxon>
        <taxon>Trypanosomatidae</taxon>
        <taxon>Trypanosoma</taxon>
        <taxon>Schizotrypanum</taxon>
    </lineage>
</organism>
<accession>Q26327</accession>
<sequence>EFGILEDGETIFVYVNGQMLGSSKTMPTGKERLLDISHFYFGGDNGEEKGNRHVKVRNVLLYNRVLSASELQCRLPEEVVQKPQSASPTYLKARI</sequence>
<name>DAFT_TRYCR</name>
<comment type="function">
    <text>Interferes with the efficient assembly of the host C3 convertase. Could protect parasites from complement-mediated lysis by sera from a number of different species.</text>
</comment>
<comment type="similarity">
    <text evidence="1">Belongs to the receptors of complement activation (RCA) family.</text>
</comment>
<proteinExistence type="evidence at transcript level"/>